<organism>
    <name type="scientific">Streptococcus pyogenes serotype M12 (strain MGAS2096)</name>
    <dbReference type="NCBI Taxonomy" id="370553"/>
    <lineage>
        <taxon>Bacteria</taxon>
        <taxon>Bacillati</taxon>
        <taxon>Bacillota</taxon>
        <taxon>Bacilli</taxon>
        <taxon>Lactobacillales</taxon>
        <taxon>Streptococcaceae</taxon>
        <taxon>Streptococcus</taxon>
    </lineage>
</organism>
<comment type="function">
    <text evidence="1">The UvrABC repair system catalyzes the recognition and processing of DNA lesions. UvrC both incises the 5' and 3' sides of the lesion. The N-terminal half is responsible for the 3' incision and the C-terminal half is responsible for the 5' incision.</text>
</comment>
<comment type="subunit">
    <text evidence="1">Interacts with UvrB in an incision complex.</text>
</comment>
<comment type="subcellular location">
    <subcellularLocation>
        <location evidence="1">Cytoplasm</location>
    </subcellularLocation>
</comment>
<comment type="similarity">
    <text evidence="1">Belongs to the UvrC family.</text>
</comment>
<proteinExistence type="inferred from homology"/>
<sequence>MNELIKHKLELLPDSPGCYLHKDKEGTIIYVGKAKNLKKRVRSYFRGSHDTKTELLVSEIVDFEYIVTESDTEALLLEINLIQKNMPKYNIKLKDDKSYPFLKITNESFPRLVITRYIKKNDGLYFGPYPDSYTANEVKKLLDRIFPFKKCKNPINKVCFYYHLGQCCAHTICHTDKAYWDRLIDDVKHFLNGKDDKIIEDLRSKMLAASEEMAFERAAEYRDLISGIATMRTKQRVMSKDLQDRDIFGYYVDKGWMCVQVFFVRQGKLIQRDVNLFPYYNDAEEDFLTYMGQFYQDKQHFIPKEVFIPEAIDEELVAAIVPTKIIKPKRGEKKQLVALATKNARVSLQQKFDLLEKDIKKTSGAIENLGQLLRIDKPVRIEAFDNSNIQGTSPVAAMVVFVDGKPSKKDYRKFKIKTVVGPDDYASMREVLFRRYSRVKKEGLQAPNLIIVDGGVGQVNVAKDVIEKQLGLTIPVAGLQKNDKHQTHDLLFGNPLEVVPLPRRSEEFFLLHRIQDEVHRFAVTFHRQVRRKNSFSSTLDHISGLGPKRKQLLLRHFKTITAIASATSEEIQALGIPKTVVEAIQQQITDNKNDRSSP</sequence>
<protein>
    <recommendedName>
        <fullName evidence="1">UvrABC system protein C</fullName>
        <shortName evidence="1">Protein UvrC</shortName>
    </recommendedName>
    <alternativeName>
        <fullName evidence="1">Excinuclease ABC subunit C</fullName>
    </alternativeName>
</protein>
<reference key="1">
    <citation type="journal article" date="2006" name="Proc. Natl. Acad. Sci. U.S.A.">
        <title>Molecular genetic anatomy of inter- and intraserotype variation in the human bacterial pathogen group A Streptococcus.</title>
        <authorList>
            <person name="Beres S.B."/>
            <person name="Richter E.W."/>
            <person name="Nagiec M.J."/>
            <person name="Sumby P."/>
            <person name="Porcella S.F."/>
            <person name="DeLeo F.R."/>
            <person name="Musser J.M."/>
        </authorList>
    </citation>
    <scope>NUCLEOTIDE SEQUENCE [LARGE SCALE GENOMIC DNA]</scope>
    <source>
        <strain>MGAS2096</strain>
    </source>
</reference>
<accession>Q1JBZ4</accession>
<keyword id="KW-0963">Cytoplasm</keyword>
<keyword id="KW-0227">DNA damage</keyword>
<keyword id="KW-0228">DNA excision</keyword>
<keyword id="KW-0234">DNA repair</keyword>
<keyword id="KW-0267">Excision nuclease</keyword>
<keyword id="KW-0742">SOS response</keyword>
<evidence type="ECO:0000255" key="1">
    <source>
        <dbReference type="HAMAP-Rule" id="MF_00203"/>
    </source>
</evidence>
<name>UVRC_STRPB</name>
<dbReference type="EMBL" id="CP000261">
    <property type="protein sequence ID" value="ABF35914.1"/>
    <property type="molecule type" value="Genomic_DNA"/>
</dbReference>
<dbReference type="SMR" id="Q1JBZ4"/>
<dbReference type="KEGG" id="spj:MGAS2096_Spy0862"/>
<dbReference type="HOGENOM" id="CLU_014841_3_2_9"/>
<dbReference type="GO" id="GO:0005737">
    <property type="term" value="C:cytoplasm"/>
    <property type="evidence" value="ECO:0007669"/>
    <property type="project" value="UniProtKB-SubCell"/>
</dbReference>
<dbReference type="GO" id="GO:0009380">
    <property type="term" value="C:excinuclease repair complex"/>
    <property type="evidence" value="ECO:0007669"/>
    <property type="project" value="InterPro"/>
</dbReference>
<dbReference type="GO" id="GO:0003677">
    <property type="term" value="F:DNA binding"/>
    <property type="evidence" value="ECO:0007669"/>
    <property type="project" value="UniProtKB-UniRule"/>
</dbReference>
<dbReference type="GO" id="GO:0009381">
    <property type="term" value="F:excinuclease ABC activity"/>
    <property type="evidence" value="ECO:0007669"/>
    <property type="project" value="UniProtKB-UniRule"/>
</dbReference>
<dbReference type="GO" id="GO:0006289">
    <property type="term" value="P:nucleotide-excision repair"/>
    <property type="evidence" value="ECO:0007669"/>
    <property type="project" value="UniProtKB-UniRule"/>
</dbReference>
<dbReference type="GO" id="GO:0009432">
    <property type="term" value="P:SOS response"/>
    <property type="evidence" value="ECO:0007669"/>
    <property type="project" value="UniProtKB-UniRule"/>
</dbReference>
<dbReference type="CDD" id="cd10434">
    <property type="entry name" value="GIY-YIG_UvrC_Cho"/>
    <property type="match status" value="1"/>
</dbReference>
<dbReference type="FunFam" id="3.30.420.340:FF:000002">
    <property type="entry name" value="UvrABC system protein C"/>
    <property type="match status" value="1"/>
</dbReference>
<dbReference type="FunFam" id="3.40.1440.10:FF:000001">
    <property type="entry name" value="UvrABC system protein C"/>
    <property type="match status" value="1"/>
</dbReference>
<dbReference type="Gene3D" id="1.10.150.20">
    <property type="entry name" value="5' to 3' exonuclease, C-terminal subdomain"/>
    <property type="match status" value="1"/>
</dbReference>
<dbReference type="Gene3D" id="3.40.1440.10">
    <property type="entry name" value="GIY-YIG endonuclease"/>
    <property type="match status" value="1"/>
</dbReference>
<dbReference type="Gene3D" id="4.10.860.10">
    <property type="entry name" value="UVR domain"/>
    <property type="match status" value="1"/>
</dbReference>
<dbReference type="Gene3D" id="3.30.420.340">
    <property type="entry name" value="UvrC, RNAse H endonuclease domain"/>
    <property type="match status" value="1"/>
</dbReference>
<dbReference type="HAMAP" id="MF_00203">
    <property type="entry name" value="UvrC"/>
    <property type="match status" value="1"/>
</dbReference>
<dbReference type="InterPro" id="IPR000305">
    <property type="entry name" value="GIY-YIG_endonuc"/>
</dbReference>
<dbReference type="InterPro" id="IPR035901">
    <property type="entry name" value="GIY-YIG_endonuc_sf"/>
</dbReference>
<dbReference type="InterPro" id="IPR047296">
    <property type="entry name" value="GIY-YIG_UvrC_Cho"/>
</dbReference>
<dbReference type="InterPro" id="IPR010994">
    <property type="entry name" value="RuvA_2-like"/>
</dbReference>
<dbReference type="InterPro" id="IPR001943">
    <property type="entry name" value="UVR_dom"/>
</dbReference>
<dbReference type="InterPro" id="IPR036876">
    <property type="entry name" value="UVR_dom_sf"/>
</dbReference>
<dbReference type="InterPro" id="IPR050066">
    <property type="entry name" value="UvrABC_protein_C"/>
</dbReference>
<dbReference type="InterPro" id="IPR004791">
    <property type="entry name" value="UvrC"/>
</dbReference>
<dbReference type="InterPro" id="IPR001162">
    <property type="entry name" value="UvrC_RNase_H_dom"/>
</dbReference>
<dbReference type="InterPro" id="IPR038476">
    <property type="entry name" value="UvrC_RNase_H_dom_sf"/>
</dbReference>
<dbReference type="NCBIfam" id="TIGR00194">
    <property type="entry name" value="uvrC"/>
    <property type="match status" value="1"/>
</dbReference>
<dbReference type="PANTHER" id="PTHR30562:SF1">
    <property type="entry name" value="UVRABC SYSTEM PROTEIN C"/>
    <property type="match status" value="1"/>
</dbReference>
<dbReference type="PANTHER" id="PTHR30562">
    <property type="entry name" value="UVRC/OXIDOREDUCTASE"/>
    <property type="match status" value="1"/>
</dbReference>
<dbReference type="Pfam" id="PF01541">
    <property type="entry name" value="GIY-YIG"/>
    <property type="match status" value="1"/>
</dbReference>
<dbReference type="Pfam" id="PF14520">
    <property type="entry name" value="HHH_5"/>
    <property type="match status" value="1"/>
</dbReference>
<dbReference type="Pfam" id="PF02151">
    <property type="entry name" value="UVR"/>
    <property type="match status" value="1"/>
</dbReference>
<dbReference type="Pfam" id="PF22920">
    <property type="entry name" value="UvrC_RNaseH"/>
    <property type="match status" value="1"/>
</dbReference>
<dbReference type="Pfam" id="PF08459">
    <property type="entry name" value="UvrC_RNaseH_dom"/>
    <property type="match status" value="1"/>
</dbReference>
<dbReference type="SMART" id="SM00465">
    <property type="entry name" value="GIYc"/>
    <property type="match status" value="1"/>
</dbReference>
<dbReference type="SUPFAM" id="SSF46600">
    <property type="entry name" value="C-terminal UvrC-binding domain of UvrB"/>
    <property type="match status" value="1"/>
</dbReference>
<dbReference type="SUPFAM" id="SSF82771">
    <property type="entry name" value="GIY-YIG endonuclease"/>
    <property type="match status" value="1"/>
</dbReference>
<dbReference type="SUPFAM" id="SSF47781">
    <property type="entry name" value="RuvA domain 2-like"/>
    <property type="match status" value="1"/>
</dbReference>
<dbReference type="PROSITE" id="PS50164">
    <property type="entry name" value="GIY_YIG"/>
    <property type="match status" value="1"/>
</dbReference>
<dbReference type="PROSITE" id="PS50151">
    <property type="entry name" value="UVR"/>
    <property type="match status" value="1"/>
</dbReference>
<dbReference type="PROSITE" id="PS50165">
    <property type="entry name" value="UVRC"/>
    <property type="match status" value="1"/>
</dbReference>
<gene>
    <name evidence="1" type="primary">uvrC</name>
    <name type="ordered locus">MGAS2096_Spy0862</name>
</gene>
<feature type="chain" id="PRO_0000264958" description="UvrABC system protein C">
    <location>
        <begin position="1"/>
        <end position="598"/>
    </location>
</feature>
<feature type="domain" description="GIY-YIG" evidence="1">
    <location>
        <begin position="14"/>
        <end position="91"/>
    </location>
</feature>
<feature type="domain" description="UVR" evidence="1">
    <location>
        <begin position="196"/>
        <end position="231"/>
    </location>
</feature>